<reference key="1">
    <citation type="journal article" date="2002" name="Mol. Biol. Evol.">
        <title>The plastid chromosome of Atropa belladonna and its comparison with that of Nicotiana tabacum: the role of RNA editing in generating divergence in the process of plant speciation.</title>
        <authorList>
            <person name="Schmitz-Linneweber C."/>
            <person name="Regel R."/>
            <person name="Du T.G."/>
            <person name="Hupfer H."/>
            <person name="Herrmann R.G."/>
            <person name="Maier R.M."/>
        </authorList>
    </citation>
    <scope>NUCLEOTIDE SEQUENCE [LARGE SCALE GENOMIC DNA]</scope>
    <source>
        <strain>cv. Ab5p(kan)</strain>
    </source>
</reference>
<reference key="2">
    <citation type="journal article" date="1994" name="Syst. Biol.">
        <title>Combining data in phylogenetic systematics: an empirical approach using three molecular data sets in the Solanaceae.</title>
        <authorList>
            <person name="Olmstead R.G."/>
            <person name="Sweere J.A."/>
        </authorList>
    </citation>
    <scope>NUCLEOTIDE SEQUENCE [GENOMIC DNA] OF 10-477</scope>
</reference>
<geneLocation type="chloroplast"/>
<organism>
    <name type="scientific">Atropa belladonna</name>
    <name type="common">Belladonna</name>
    <name type="synonym">Deadly nightshade</name>
    <dbReference type="NCBI Taxonomy" id="33113"/>
    <lineage>
        <taxon>Eukaryota</taxon>
        <taxon>Viridiplantae</taxon>
        <taxon>Streptophyta</taxon>
        <taxon>Embryophyta</taxon>
        <taxon>Tracheophyta</taxon>
        <taxon>Spermatophyta</taxon>
        <taxon>Magnoliopsida</taxon>
        <taxon>eudicotyledons</taxon>
        <taxon>Gunneridae</taxon>
        <taxon>Pentapetalae</taxon>
        <taxon>asterids</taxon>
        <taxon>lamiids</taxon>
        <taxon>Solanales</taxon>
        <taxon>Solanaceae</taxon>
        <taxon>Solanoideae</taxon>
        <taxon>Hyoscyameae</taxon>
        <taxon>Atropa</taxon>
    </lineage>
</organism>
<accession>Q8RU60</accession>
<accession>Q31772</accession>
<dbReference type="EC" id="4.1.1.39" evidence="1"/>
<dbReference type="EMBL" id="AJ316582">
    <property type="protein sequence ID" value="CAC88052.1"/>
    <property type="molecule type" value="Genomic_DNA"/>
</dbReference>
<dbReference type="EMBL" id="U08609">
    <property type="protein sequence ID" value="AAA18384.1"/>
    <property type="molecule type" value="Genomic_DNA"/>
</dbReference>
<dbReference type="RefSeq" id="NP_783240.1">
    <property type="nucleotide sequence ID" value="NC_004561.1"/>
</dbReference>
<dbReference type="SMR" id="Q8RU60"/>
<dbReference type="GeneID" id="806501"/>
<dbReference type="GO" id="GO:0009507">
    <property type="term" value="C:chloroplast"/>
    <property type="evidence" value="ECO:0007669"/>
    <property type="project" value="UniProtKB-SubCell"/>
</dbReference>
<dbReference type="GO" id="GO:0000287">
    <property type="term" value="F:magnesium ion binding"/>
    <property type="evidence" value="ECO:0007669"/>
    <property type="project" value="UniProtKB-UniRule"/>
</dbReference>
<dbReference type="GO" id="GO:0004497">
    <property type="term" value="F:monooxygenase activity"/>
    <property type="evidence" value="ECO:0007669"/>
    <property type="project" value="UniProtKB-KW"/>
</dbReference>
<dbReference type="GO" id="GO:0016984">
    <property type="term" value="F:ribulose-bisphosphate carboxylase activity"/>
    <property type="evidence" value="ECO:0007669"/>
    <property type="project" value="UniProtKB-UniRule"/>
</dbReference>
<dbReference type="GO" id="GO:0009853">
    <property type="term" value="P:photorespiration"/>
    <property type="evidence" value="ECO:0007669"/>
    <property type="project" value="UniProtKB-KW"/>
</dbReference>
<dbReference type="GO" id="GO:0019253">
    <property type="term" value="P:reductive pentose-phosphate cycle"/>
    <property type="evidence" value="ECO:0007669"/>
    <property type="project" value="UniProtKB-UniRule"/>
</dbReference>
<dbReference type="CDD" id="cd08212">
    <property type="entry name" value="RuBisCO_large_I"/>
    <property type="match status" value="1"/>
</dbReference>
<dbReference type="FunFam" id="3.20.20.110:FF:000001">
    <property type="entry name" value="Ribulose bisphosphate carboxylase large chain"/>
    <property type="match status" value="1"/>
</dbReference>
<dbReference type="FunFam" id="3.30.70.150:FF:000001">
    <property type="entry name" value="Ribulose bisphosphate carboxylase large chain"/>
    <property type="match status" value="1"/>
</dbReference>
<dbReference type="Gene3D" id="3.20.20.110">
    <property type="entry name" value="Ribulose bisphosphate carboxylase, large subunit, C-terminal domain"/>
    <property type="match status" value="1"/>
</dbReference>
<dbReference type="Gene3D" id="3.30.70.150">
    <property type="entry name" value="RuBisCO large subunit, N-terminal domain"/>
    <property type="match status" value="1"/>
</dbReference>
<dbReference type="HAMAP" id="MF_01338">
    <property type="entry name" value="RuBisCO_L_type1"/>
    <property type="match status" value="1"/>
</dbReference>
<dbReference type="InterPro" id="IPR033966">
    <property type="entry name" value="RuBisCO"/>
</dbReference>
<dbReference type="InterPro" id="IPR020878">
    <property type="entry name" value="RuBisCo_large_chain_AS"/>
</dbReference>
<dbReference type="InterPro" id="IPR000685">
    <property type="entry name" value="RuBisCO_lsu_C"/>
</dbReference>
<dbReference type="InterPro" id="IPR036376">
    <property type="entry name" value="RuBisCO_lsu_C_sf"/>
</dbReference>
<dbReference type="InterPro" id="IPR017443">
    <property type="entry name" value="RuBisCO_lsu_fd_N"/>
</dbReference>
<dbReference type="InterPro" id="IPR036422">
    <property type="entry name" value="RuBisCO_lsu_N_sf"/>
</dbReference>
<dbReference type="InterPro" id="IPR020888">
    <property type="entry name" value="RuBisCO_lsuI"/>
</dbReference>
<dbReference type="NCBIfam" id="NF003252">
    <property type="entry name" value="PRK04208.1"/>
    <property type="match status" value="1"/>
</dbReference>
<dbReference type="PANTHER" id="PTHR42704">
    <property type="entry name" value="RIBULOSE BISPHOSPHATE CARBOXYLASE"/>
    <property type="match status" value="1"/>
</dbReference>
<dbReference type="PANTHER" id="PTHR42704:SF16">
    <property type="entry name" value="RIBULOSE BISPHOSPHATE CARBOXYLASE LARGE CHAIN"/>
    <property type="match status" value="1"/>
</dbReference>
<dbReference type="Pfam" id="PF00016">
    <property type="entry name" value="RuBisCO_large"/>
    <property type="match status" value="1"/>
</dbReference>
<dbReference type="Pfam" id="PF02788">
    <property type="entry name" value="RuBisCO_large_N"/>
    <property type="match status" value="1"/>
</dbReference>
<dbReference type="SFLD" id="SFLDG01052">
    <property type="entry name" value="RuBisCO"/>
    <property type="match status" value="1"/>
</dbReference>
<dbReference type="SFLD" id="SFLDS00014">
    <property type="entry name" value="RuBisCO"/>
    <property type="match status" value="1"/>
</dbReference>
<dbReference type="SFLD" id="SFLDG00301">
    <property type="entry name" value="RuBisCO-like_proteins"/>
    <property type="match status" value="1"/>
</dbReference>
<dbReference type="SUPFAM" id="SSF51649">
    <property type="entry name" value="RuBisCo, C-terminal domain"/>
    <property type="match status" value="1"/>
</dbReference>
<dbReference type="SUPFAM" id="SSF54966">
    <property type="entry name" value="RuBisCO, large subunit, small (N-terminal) domain"/>
    <property type="match status" value="1"/>
</dbReference>
<dbReference type="PROSITE" id="PS00157">
    <property type="entry name" value="RUBISCO_LARGE"/>
    <property type="match status" value="1"/>
</dbReference>
<keyword id="KW-0007">Acetylation</keyword>
<keyword id="KW-0113">Calvin cycle</keyword>
<keyword id="KW-0120">Carbon dioxide fixation</keyword>
<keyword id="KW-0150">Chloroplast</keyword>
<keyword id="KW-1015">Disulfide bond</keyword>
<keyword id="KW-0456">Lyase</keyword>
<keyword id="KW-0460">Magnesium</keyword>
<keyword id="KW-0479">Metal-binding</keyword>
<keyword id="KW-0488">Methylation</keyword>
<keyword id="KW-0503">Monooxygenase</keyword>
<keyword id="KW-0560">Oxidoreductase</keyword>
<keyword id="KW-0601">Photorespiration</keyword>
<keyword id="KW-0602">Photosynthesis</keyword>
<keyword id="KW-0934">Plastid</keyword>
<name>RBL_ATRBE</name>
<evidence type="ECO:0000255" key="1">
    <source>
        <dbReference type="HAMAP-Rule" id="MF_01338"/>
    </source>
</evidence>
<proteinExistence type="inferred from homology"/>
<comment type="function">
    <text evidence="1">RuBisCO catalyzes two reactions: the carboxylation of D-ribulose 1,5-bisphosphate, the primary event in carbon dioxide fixation, as well as the oxidative fragmentation of the pentose substrate in the photorespiration process. Both reactions occur simultaneously and in competition at the same active site.</text>
</comment>
<comment type="catalytic activity">
    <reaction evidence="1">
        <text>2 (2R)-3-phosphoglycerate + 2 H(+) = D-ribulose 1,5-bisphosphate + CO2 + H2O</text>
        <dbReference type="Rhea" id="RHEA:23124"/>
        <dbReference type="ChEBI" id="CHEBI:15377"/>
        <dbReference type="ChEBI" id="CHEBI:15378"/>
        <dbReference type="ChEBI" id="CHEBI:16526"/>
        <dbReference type="ChEBI" id="CHEBI:57870"/>
        <dbReference type="ChEBI" id="CHEBI:58272"/>
        <dbReference type="EC" id="4.1.1.39"/>
    </reaction>
</comment>
<comment type="catalytic activity">
    <reaction evidence="1">
        <text>D-ribulose 1,5-bisphosphate + O2 = 2-phosphoglycolate + (2R)-3-phosphoglycerate + 2 H(+)</text>
        <dbReference type="Rhea" id="RHEA:36631"/>
        <dbReference type="ChEBI" id="CHEBI:15378"/>
        <dbReference type="ChEBI" id="CHEBI:15379"/>
        <dbReference type="ChEBI" id="CHEBI:57870"/>
        <dbReference type="ChEBI" id="CHEBI:58033"/>
        <dbReference type="ChEBI" id="CHEBI:58272"/>
    </reaction>
</comment>
<comment type="cofactor">
    <cofactor evidence="1">
        <name>Mg(2+)</name>
        <dbReference type="ChEBI" id="CHEBI:18420"/>
    </cofactor>
    <text evidence="1">Binds 1 Mg(2+) ion per subunit.</text>
</comment>
<comment type="subunit">
    <text evidence="1">Heterohexadecamer of 8 large chains and 8 small chains; disulfide-linked. The disulfide link is formed within the large subunit homodimers.</text>
</comment>
<comment type="subcellular location">
    <subcellularLocation>
        <location>Plastid</location>
        <location>Chloroplast</location>
    </subcellularLocation>
</comment>
<comment type="PTM">
    <text evidence="1">The disulfide bond which can form in the large chain dimeric partners within the hexadecamer appears to be associated with oxidative stress and protein turnover.</text>
</comment>
<comment type="miscellaneous">
    <text evidence="1">The basic functional RuBisCO is composed of a large chain homodimer in a 'head-to-tail' conformation. In form I RuBisCO this homodimer is arranged in a barrel-like tetramer with the small subunits forming a tetrameric 'cap' on each end of the 'barrel'.</text>
</comment>
<comment type="similarity">
    <text evidence="1">Belongs to the RuBisCO large chain family. Type I subfamily.</text>
</comment>
<protein>
    <recommendedName>
        <fullName evidence="1">Ribulose bisphosphate carboxylase large chain</fullName>
        <shortName evidence="1">RuBisCO large subunit</shortName>
        <ecNumber evidence="1">4.1.1.39</ecNumber>
    </recommendedName>
</protein>
<gene>
    <name evidence="1" type="primary">rbcL</name>
</gene>
<sequence length="477" mass="52924">MSPQTETKASVGFKAGVKEYKLTYYTPEYQTKDTDILAAFRVTPQPGVPPEEAGAAVAAESSTGTWTTVWTDGLTSLDRYKGRCYRIERVVGEKDQYIAYVAYPLDLFEEGSVTNMFTSIVGNVFGFKALRALRLEDLRIPPAYVKTFQGPPHGIQVERDKLNKYGRPLLGCTIKPKLGLSAKNYGRAVYECLRGGLDFTKDDENVNSQPFMRWRDRFLFCAEALYKAQAETGEIKGHYLNATAGTCEEMIKRAVFARELGVPIVMHDYLTGGFTANTSLAHYCRDNGLLLHIHRAMHAVIDRQKNHGIHFRVLAKALRMSGGDHIHSGTVVGKLEGERDITLGFVDLLRDDFVEQDRSRGIYFTQDWVSLPGVLPVASGGIHVWHMPALTEIFGDDSVLQFGGGTLGHPWGNPPGAVANRVALEACVKARNEGRDLAQEGNEIIREACKWSPELAAACEVWKEIVFNFAAVDVLDK</sequence>
<feature type="propeptide" id="PRO_0000031125" evidence="1">
    <location>
        <begin position="1"/>
        <end position="2"/>
    </location>
</feature>
<feature type="chain" id="PRO_0000031126" description="Ribulose bisphosphate carboxylase large chain">
    <location>
        <begin position="3"/>
        <end position="477"/>
    </location>
</feature>
<feature type="active site" description="Proton acceptor" evidence="1">
    <location>
        <position position="175"/>
    </location>
</feature>
<feature type="active site" description="Proton acceptor" evidence="1">
    <location>
        <position position="294"/>
    </location>
</feature>
<feature type="binding site" description="in homodimeric partner" evidence="1">
    <location>
        <position position="123"/>
    </location>
    <ligand>
        <name>substrate</name>
    </ligand>
</feature>
<feature type="binding site" evidence="1">
    <location>
        <position position="173"/>
    </location>
    <ligand>
        <name>substrate</name>
    </ligand>
</feature>
<feature type="binding site" evidence="1">
    <location>
        <position position="177"/>
    </location>
    <ligand>
        <name>substrate</name>
    </ligand>
</feature>
<feature type="binding site" description="via carbamate group" evidence="1">
    <location>
        <position position="201"/>
    </location>
    <ligand>
        <name>Mg(2+)</name>
        <dbReference type="ChEBI" id="CHEBI:18420"/>
    </ligand>
</feature>
<feature type="binding site" evidence="1">
    <location>
        <position position="203"/>
    </location>
    <ligand>
        <name>Mg(2+)</name>
        <dbReference type="ChEBI" id="CHEBI:18420"/>
    </ligand>
</feature>
<feature type="binding site" evidence="1">
    <location>
        <position position="204"/>
    </location>
    <ligand>
        <name>Mg(2+)</name>
        <dbReference type="ChEBI" id="CHEBI:18420"/>
    </ligand>
</feature>
<feature type="binding site" evidence="1">
    <location>
        <position position="295"/>
    </location>
    <ligand>
        <name>substrate</name>
    </ligand>
</feature>
<feature type="binding site" evidence="1">
    <location>
        <position position="327"/>
    </location>
    <ligand>
        <name>substrate</name>
    </ligand>
</feature>
<feature type="binding site" evidence="1">
    <location>
        <position position="379"/>
    </location>
    <ligand>
        <name>substrate</name>
    </ligand>
</feature>
<feature type="site" description="Transition state stabilizer" evidence="1">
    <location>
        <position position="334"/>
    </location>
</feature>
<feature type="modified residue" description="N-acetylproline" evidence="1">
    <location>
        <position position="3"/>
    </location>
</feature>
<feature type="modified residue" description="N6,N6,N6-trimethyllysine" evidence="1">
    <location>
        <position position="14"/>
    </location>
</feature>
<feature type="modified residue" description="N6-carboxylysine" evidence="1">
    <location>
        <position position="201"/>
    </location>
</feature>
<feature type="disulfide bond" description="Interchain; in linked form" evidence="1">
    <location>
        <position position="247"/>
    </location>
</feature>